<evidence type="ECO:0000255" key="1">
    <source>
        <dbReference type="HAMAP-Rule" id="MF_01321"/>
    </source>
</evidence>
<evidence type="ECO:0000305" key="2"/>
<evidence type="ECO:0007829" key="3">
    <source>
        <dbReference type="PDB" id="7XL3"/>
    </source>
</evidence>
<evidence type="ECO:0007829" key="4">
    <source>
        <dbReference type="PDB" id="7XYA"/>
    </source>
</evidence>
<protein>
    <recommendedName>
        <fullName evidence="1">DNA-directed RNA polymerase subunit beta</fullName>
        <shortName evidence="1">RNAP subunit beta</shortName>
        <ecNumber evidence="1">2.7.7.6</ecNumber>
    </recommendedName>
    <alternativeName>
        <fullName evidence="1">RNA polymerase subunit beta</fullName>
    </alternativeName>
    <alternativeName>
        <fullName evidence="1">Transcriptase subunit beta</fullName>
    </alternativeName>
</protein>
<reference key="1">
    <citation type="journal article" date="2000" name="Nature">
        <title>Complete genome sequence of Pseudomonas aeruginosa PAO1, an opportunistic pathogen.</title>
        <authorList>
            <person name="Stover C.K."/>
            <person name="Pham X.-Q.T."/>
            <person name="Erwin A.L."/>
            <person name="Mizoguchi S.D."/>
            <person name="Warrener P."/>
            <person name="Hickey M.J."/>
            <person name="Brinkman F.S.L."/>
            <person name="Hufnagle W.O."/>
            <person name="Kowalik D.J."/>
            <person name="Lagrou M."/>
            <person name="Garber R.L."/>
            <person name="Goltry L."/>
            <person name="Tolentino E."/>
            <person name="Westbrock-Wadman S."/>
            <person name="Yuan Y."/>
            <person name="Brody L.L."/>
            <person name="Coulter S.N."/>
            <person name="Folger K.R."/>
            <person name="Kas A."/>
            <person name="Larbig K."/>
            <person name="Lim R.M."/>
            <person name="Smith K.A."/>
            <person name="Spencer D.H."/>
            <person name="Wong G.K.-S."/>
            <person name="Wu Z."/>
            <person name="Paulsen I.T."/>
            <person name="Reizer J."/>
            <person name="Saier M.H. Jr."/>
            <person name="Hancock R.E.W."/>
            <person name="Lory S."/>
            <person name="Olson M.V."/>
        </authorList>
    </citation>
    <scope>NUCLEOTIDE SEQUENCE [LARGE SCALE GENOMIC DNA]</scope>
    <source>
        <strain>ATCC 15692 / DSM 22644 / CIP 104116 / JCM 14847 / LMG 12228 / 1C / PRS 101 / PAO1</strain>
    </source>
</reference>
<reference key="2">
    <citation type="submission" date="1992-12" db="EMBL/GenBank/DDBJ databases">
        <title>A mechanism of resistance of rifampin in Pseudomonas aeruginosa.</title>
        <authorList>
            <person name="Yee Y.C."/>
            <person name="Jin D.J."/>
            <person name="Yu V.L."/>
        </authorList>
    </citation>
    <scope>NUCLEOTIDE SEQUENCE [GENOMIC DNA] OF 480-760</scope>
</reference>
<proteinExistence type="evidence at protein level"/>
<feature type="chain" id="PRO_0000047940" description="DNA-directed RNA polymerase subunit beta">
    <location>
        <begin position="1"/>
        <end position="1357"/>
    </location>
</feature>
<feature type="sequence conflict" description="In Ref. 2; AAA25985." evidence="2" ref="2">
    <original>V</original>
    <variation>G</variation>
    <location>
        <position position="480"/>
    </location>
</feature>
<feature type="sequence conflict" description="In Ref. 2; AAA25985." evidence="2" ref="2">
    <original>I</original>
    <variation>D</variation>
    <location>
        <position position="507"/>
    </location>
</feature>
<feature type="sequence conflict" description="In Ref. 2; AAA25985." evidence="2" ref="2">
    <original>RT</original>
    <variation>AP</variation>
    <location>
        <begin position="585"/>
        <end position="586"/>
    </location>
</feature>
<feature type="sequence conflict" description="In Ref. 2; AAA25985." evidence="2" ref="2">
    <original>VT</original>
    <variation>AD</variation>
    <location>
        <begin position="655"/>
        <end position="656"/>
    </location>
</feature>
<feature type="turn" evidence="3">
    <location>
        <begin position="5"/>
        <end position="9"/>
    </location>
</feature>
<feature type="helix" evidence="3">
    <location>
        <begin position="29"/>
        <end position="38"/>
    </location>
</feature>
<feature type="strand" evidence="3">
    <location>
        <begin position="50"/>
        <end position="52"/>
    </location>
</feature>
<feature type="helix" evidence="3">
    <location>
        <begin position="53"/>
        <end position="60"/>
    </location>
</feature>
<feature type="strand" evidence="3">
    <location>
        <begin position="61"/>
        <end position="64"/>
    </location>
</feature>
<feature type="strand" evidence="3">
    <location>
        <begin position="68"/>
        <end position="79"/>
    </location>
</feature>
<feature type="helix" evidence="3">
    <location>
        <begin position="87"/>
        <end position="89"/>
    </location>
</feature>
<feature type="turn" evidence="3">
    <location>
        <begin position="90"/>
        <end position="93"/>
    </location>
</feature>
<feature type="strand" evidence="3">
    <location>
        <begin position="100"/>
        <end position="108"/>
    </location>
</feature>
<feature type="strand" evidence="3">
    <location>
        <begin position="112"/>
        <end position="114"/>
    </location>
</feature>
<feature type="strand" evidence="3">
    <location>
        <begin position="121"/>
        <end position="124"/>
    </location>
</feature>
<feature type="strand" evidence="3">
    <location>
        <begin position="140"/>
        <end position="142"/>
    </location>
</feature>
<feature type="strand" evidence="3">
    <location>
        <begin position="145"/>
        <end position="149"/>
    </location>
</feature>
<feature type="strand" evidence="3">
    <location>
        <begin position="151"/>
        <end position="155"/>
    </location>
</feature>
<feature type="strand" evidence="4">
    <location>
        <begin position="157"/>
        <end position="161"/>
    </location>
</feature>
<feature type="turn" evidence="3">
    <location>
        <begin position="167"/>
        <end position="170"/>
    </location>
</feature>
<feature type="strand" evidence="4">
    <location>
        <begin position="178"/>
        <end position="181"/>
    </location>
</feature>
<feature type="strand" evidence="3">
    <location>
        <begin position="183"/>
        <end position="185"/>
    </location>
</feature>
<feature type="strand" evidence="3">
    <location>
        <begin position="188"/>
        <end position="193"/>
    </location>
</feature>
<feature type="turn" evidence="3">
    <location>
        <begin position="194"/>
        <end position="196"/>
    </location>
</feature>
<feature type="strand" evidence="3">
    <location>
        <begin position="197"/>
        <end position="204"/>
    </location>
</feature>
<feature type="strand" evidence="3">
    <location>
        <begin position="208"/>
        <end position="211"/>
    </location>
</feature>
<feature type="helix" evidence="3">
    <location>
        <begin position="212"/>
        <end position="215"/>
    </location>
</feature>
<feature type="turn" evidence="3">
    <location>
        <begin position="216"/>
        <end position="218"/>
    </location>
</feature>
<feature type="helix" evidence="3">
    <location>
        <begin position="221"/>
        <end position="226"/>
    </location>
</feature>
<feature type="strand" evidence="3">
    <location>
        <begin position="232"/>
        <end position="235"/>
    </location>
</feature>
<feature type="strand" evidence="3">
    <location>
        <begin position="237"/>
        <end position="239"/>
    </location>
</feature>
<feature type="turn" evidence="3">
    <location>
        <begin position="247"/>
        <end position="249"/>
    </location>
</feature>
<feature type="turn" evidence="3">
    <location>
        <begin position="261"/>
        <end position="263"/>
    </location>
</feature>
<feature type="helix" evidence="3">
    <location>
        <begin position="276"/>
        <end position="279"/>
    </location>
</feature>
<feature type="helix" evidence="3">
    <location>
        <begin position="281"/>
        <end position="285"/>
    </location>
</feature>
<feature type="strand" evidence="3">
    <location>
        <begin position="294"/>
        <end position="300"/>
    </location>
</feature>
<feature type="strand" evidence="3">
    <location>
        <begin position="302"/>
        <end position="304"/>
    </location>
</feature>
<feature type="turn" evidence="3">
    <location>
        <begin position="309"/>
        <end position="311"/>
    </location>
</feature>
<feature type="strand" evidence="3">
    <location>
        <begin position="313"/>
        <end position="316"/>
    </location>
</feature>
<feature type="helix" evidence="3">
    <location>
        <begin position="327"/>
        <end position="333"/>
    </location>
</feature>
<feature type="strand" evidence="3">
    <location>
        <begin position="336"/>
        <end position="340"/>
    </location>
</feature>
<feature type="strand" evidence="3">
    <location>
        <begin position="345"/>
        <end position="347"/>
    </location>
</feature>
<feature type="helix" evidence="3">
    <location>
        <begin position="351"/>
        <end position="355"/>
    </location>
</feature>
<feature type="helix" evidence="3">
    <location>
        <begin position="356"/>
        <end position="360"/>
    </location>
</feature>
<feature type="helix" evidence="3">
    <location>
        <begin position="364"/>
        <end position="375"/>
    </location>
</feature>
<feature type="helix" evidence="3">
    <location>
        <begin position="383"/>
        <end position="393"/>
    </location>
</feature>
<feature type="turn" evidence="3">
    <location>
        <begin position="397"/>
        <end position="399"/>
    </location>
</feature>
<feature type="helix" evidence="3">
    <location>
        <begin position="404"/>
        <end position="414"/>
    </location>
</feature>
<feature type="turn" evidence="3">
    <location>
        <begin position="427"/>
        <end position="429"/>
    </location>
</feature>
<feature type="helix" evidence="3">
    <location>
        <begin position="430"/>
        <end position="437"/>
    </location>
</feature>
<feature type="helix" evidence="3">
    <location>
        <begin position="439"/>
        <end position="442"/>
    </location>
</feature>
<feature type="strand" evidence="3">
    <location>
        <begin position="450"/>
        <end position="452"/>
    </location>
</feature>
<feature type="turn" evidence="3">
    <location>
        <begin position="453"/>
        <end position="455"/>
    </location>
</feature>
<feature type="strand" evidence="3">
    <location>
        <begin position="456"/>
        <end position="459"/>
    </location>
</feature>
<feature type="helix" evidence="3">
    <location>
        <begin position="461"/>
        <end position="485"/>
    </location>
</feature>
<feature type="strand" evidence="3">
    <location>
        <begin position="489"/>
        <end position="492"/>
    </location>
</feature>
<feature type="helix" evidence="3">
    <location>
        <begin position="494"/>
        <end position="497"/>
    </location>
</feature>
<feature type="helix" evidence="3">
    <location>
        <begin position="501"/>
        <end position="510"/>
    </location>
</feature>
<feature type="strand" evidence="3">
    <location>
        <begin position="515"/>
        <end position="519"/>
    </location>
</feature>
<feature type="helix" evidence="3">
    <location>
        <begin position="525"/>
        <end position="532"/>
    </location>
</feature>
<feature type="strand" evidence="3">
    <location>
        <begin position="533"/>
        <end position="537"/>
    </location>
</feature>
<feature type="helix" evidence="4">
    <location>
        <begin position="545"/>
        <end position="547"/>
    </location>
</feature>
<feature type="strand" evidence="3">
    <location>
        <begin position="550"/>
        <end position="554"/>
    </location>
</feature>
<feature type="helix" evidence="3">
    <location>
        <begin position="557"/>
        <end position="559"/>
    </location>
</feature>
<feature type="turn" evidence="3">
    <location>
        <begin position="560"/>
        <end position="562"/>
    </location>
</feature>
<feature type="strand" evidence="3">
    <location>
        <begin position="570"/>
        <end position="580"/>
    </location>
</feature>
<feature type="strand" evidence="3">
    <location>
        <begin position="588"/>
        <end position="590"/>
    </location>
</feature>
<feature type="strand" evidence="3">
    <location>
        <begin position="592"/>
        <end position="599"/>
    </location>
</feature>
<feature type="strand" evidence="3">
    <location>
        <begin position="604"/>
        <end position="611"/>
    </location>
</feature>
<feature type="turn" evidence="3">
    <location>
        <begin position="614"/>
        <end position="618"/>
    </location>
</feature>
<feature type="strand" evidence="3">
    <location>
        <begin position="630"/>
        <end position="632"/>
    </location>
</feature>
<feature type="strand" evidence="3">
    <location>
        <begin position="637"/>
        <end position="641"/>
    </location>
</feature>
<feature type="strand" evidence="3">
    <location>
        <begin position="648"/>
        <end position="650"/>
    </location>
</feature>
<feature type="turn" evidence="4">
    <location>
        <begin position="652"/>
        <end position="654"/>
    </location>
</feature>
<feature type="strand" evidence="3">
    <location>
        <begin position="657"/>
        <end position="660"/>
    </location>
</feature>
<feature type="helix" evidence="3">
    <location>
        <begin position="662"/>
        <end position="664"/>
    </location>
</feature>
<feature type="helix" evidence="3">
    <location>
        <begin position="668"/>
        <end position="671"/>
    </location>
</feature>
<feature type="helix" evidence="3">
    <location>
        <begin position="676"/>
        <end position="678"/>
    </location>
</feature>
<feature type="helix" evidence="3">
    <location>
        <begin position="681"/>
        <end position="690"/>
    </location>
</feature>
<feature type="helix" evidence="3">
    <location>
        <begin position="691"/>
        <end position="693"/>
    </location>
</feature>
<feature type="strand" evidence="4">
    <location>
        <begin position="697"/>
        <end position="699"/>
    </location>
</feature>
<feature type="strand" evidence="3">
    <location>
        <begin position="704"/>
        <end position="706"/>
    </location>
</feature>
<feature type="helix" evidence="3">
    <location>
        <begin position="710"/>
        <end position="717"/>
    </location>
</feature>
<feature type="strand" evidence="3">
    <location>
        <begin position="719"/>
        <end position="722"/>
    </location>
</feature>
<feature type="strand" evidence="3">
    <location>
        <begin position="727"/>
        <end position="732"/>
    </location>
</feature>
<feature type="strand" evidence="3">
    <location>
        <begin position="734"/>
        <end position="741"/>
    </location>
</feature>
<feature type="strand" evidence="3">
    <location>
        <begin position="743"/>
        <end position="745"/>
    </location>
</feature>
<feature type="strand" evidence="3">
    <location>
        <begin position="747"/>
        <end position="750"/>
    </location>
</feature>
<feature type="strand" evidence="3">
    <location>
        <begin position="753"/>
        <end position="757"/>
    </location>
</feature>
<feature type="strand" evidence="3">
    <location>
        <begin position="761"/>
        <end position="763"/>
    </location>
</feature>
<feature type="strand" evidence="4">
    <location>
        <begin position="767"/>
        <end position="770"/>
    </location>
</feature>
<feature type="strand" evidence="3">
    <location>
        <begin position="787"/>
        <end position="790"/>
    </location>
</feature>
<feature type="strand" evidence="3">
    <location>
        <begin position="802"/>
        <end position="810"/>
    </location>
</feature>
<feature type="turn" evidence="3">
    <location>
        <begin position="813"/>
        <end position="816"/>
    </location>
</feature>
<feature type="strand" evidence="3">
    <location>
        <begin position="817"/>
        <end position="819"/>
    </location>
</feature>
<feature type="strand" evidence="3">
    <location>
        <begin position="821"/>
        <end position="825"/>
    </location>
</feature>
<feature type="helix" evidence="3">
    <location>
        <begin position="826"/>
        <end position="829"/>
    </location>
</feature>
<feature type="strand" evidence="3">
    <location>
        <begin position="835"/>
        <end position="847"/>
    </location>
</feature>
<feature type="helix" evidence="3">
    <location>
        <begin position="864"/>
        <end position="867"/>
    </location>
</feature>
<feature type="strand" evidence="3">
    <location>
        <begin position="868"/>
        <end position="870"/>
    </location>
</feature>
<feature type="strand" evidence="3">
    <location>
        <begin position="872"/>
        <end position="875"/>
    </location>
</feature>
<feature type="strand" evidence="3">
    <location>
        <begin position="887"/>
        <end position="889"/>
    </location>
</feature>
<feature type="strand" evidence="3">
    <location>
        <begin position="891"/>
        <end position="894"/>
    </location>
</feature>
<feature type="helix" evidence="3">
    <location>
        <begin position="902"/>
        <end position="911"/>
    </location>
</feature>
<feature type="strand" evidence="3">
    <location>
        <begin position="918"/>
        <end position="920"/>
    </location>
</feature>
<feature type="strand" evidence="3">
    <location>
        <begin position="931"/>
        <end position="940"/>
    </location>
</feature>
<feature type="helix" evidence="3">
    <location>
        <begin position="948"/>
        <end position="985"/>
    </location>
</feature>
<feature type="helix" evidence="3">
    <location>
        <begin position="1021"/>
        <end position="1054"/>
    </location>
</feature>
<feature type="strand" evidence="3">
    <location>
        <begin position="1063"/>
        <end position="1075"/>
    </location>
</feature>
<feature type="strand" evidence="3">
    <location>
        <begin position="1082"/>
        <end position="1084"/>
    </location>
</feature>
<feature type="strand" evidence="3">
    <location>
        <begin position="1086"/>
        <end position="1088"/>
    </location>
</feature>
<feature type="strand" evidence="3">
    <location>
        <begin position="1090"/>
        <end position="1097"/>
    </location>
</feature>
<feature type="turn" evidence="3">
    <location>
        <begin position="1099"/>
        <end position="1101"/>
    </location>
</feature>
<feature type="strand" evidence="3">
    <location>
        <begin position="1112"/>
        <end position="1115"/>
    </location>
</feature>
<feature type="helix" evidence="3">
    <location>
        <begin position="1119"/>
        <end position="1122"/>
    </location>
</feature>
<feature type="helix" evidence="3">
    <location>
        <begin position="1127"/>
        <end position="1150"/>
    </location>
</feature>
<feature type="helix" evidence="3">
    <location>
        <begin position="1155"/>
        <end position="1166"/>
    </location>
</feature>
<feature type="strand" evidence="3">
    <location>
        <begin position="1169"/>
        <end position="1171"/>
    </location>
</feature>
<feature type="turn" evidence="3">
    <location>
        <begin position="1180"/>
        <end position="1183"/>
    </location>
</feature>
<feature type="helix" evidence="3">
    <location>
        <begin position="1184"/>
        <end position="1190"/>
    </location>
</feature>
<feature type="strand" evidence="3">
    <location>
        <begin position="1201"/>
        <end position="1203"/>
    </location>
</feature>
<feature type="helix" evidence="3">
    <location>
        <begin position="1207"/>
        <end position="1214"/>
    </location>
</feature>
<feature type="turn" evidence="3">
    <location>
        <begin position="1215"/>
        <end position="1218"/>
    </location>
</feature>
<feature type="strand" evidence="3">
    <location>
        <begin position="1223"/>
        <end position="1225"/>
    </location>
</feature>
<feature type="turn" evidence="3">
    <location>
        <begin position="1230"/>
        <end position="1232"/>
    </location>
</feature>
<feature type="strand" evidence="3">
    <location>
        <begin position="1240"/>
        <end position="1251"/>
    </location>
</feature>
<feature type="helix" evidence="3">
    <location>
        <begin position="1254"/>
        <end position="1256"/>
    </location>
</feature>
<feature type="strand" evidence="3">
    <location>
        <begin position="1259"/>
        <end position="1263"/>
    </location>
</feature>
<feature type="strand" evidence="3">
    <location>
        <begin position="1266"/>
        <end position="1270"/>
    </location>
</feature>
<feature type="strand" evidence="3">
    <location>
        <begin position="1277"/>
        <end position="1279"/>
    </location>
</feature>
<feature type="helix" evidence="3">
    <location>
        <begin position="1287"/>
        <end position="1295"/>
    </location>
</feature>
<feature type="helix" evidence="3">
    <location>
        <begin position="1300"/>
        <end position="1306"/>
    </location>
</feature>
<feature type="strand" evidence="3">
    <location>
        <begin position="1309"/>
        <end position="1311"/>
    </location>
</feature>
<feature type="helix" evidence="3">
    <location>
        <begin position="1313"/>
        <end position="1325"/>
    </location>
</feature>
<feature type="helix" evidence="3">
    <location>
        <begin position="1336"/>
        <end position="1346"/>
    </location>
</feature>
<feature type="turn" evidence="3">
    <location>
        <begin position="1347"/>
        <end position="1349"/>
    </location>
</feature>
<feature type="strand" evidence="3">
    <location>
        <begin position="1350"/>
        <end position="1354"/>
    </location>
</feature>
<accession>Q51561</accession>
<gene>
    <name evidence="1" type="primary">rpoB</name>
    <name type="ordered locus">PA4270</name>
</gene>
<sequence length="1357" mass="150838">MAYSYTEKKRIRKDFSKLPDVMDVPYLLAIQLDSYREFLQAGATKEQFRDVGLHAAFKSVFPIISYSGNAALEYVGYRLGEPAFDVKECVLRGVTFAVPLRVKVRLIIFDRESSNKAIKDIKEQEVYMGEIPLMTENGTFIINGTERVIVSQLHRSPGVFFDHDRGKTHSSGKLLYSARIIPYRGSWLDFEFDPKDCVFVRIDRRRKLPASVLLRALGYSTEEILNAFYATNVFHIKGETLNLELVPQRLRGEVASIDIKDGSGKVIVEQGRRITARHINQLEKAGVSQLEVPFDYLIGRTIAKAIVHPATGEIIAECNTELTLDLLAKVAKAQVVRIETLYTNDIDCGPFISDTLKIDNTSNQLEALVEIYRMMRPGEPPTKEAAETLFGNLFFSAERYDLSAVGRMKFNRRIGRTEIEGPGVLSKEDIIDVLKTLVDIRNGKGIVDDIDHLGNRRVRCVGEMAENQFRVGLVRVERAVKERLSMAESEGLMPQDLINAKPVAAAIKEFFGSSQLSQFMDQNNPLSEITHKRRVSALGPGGLTRERAGFEVRDVHPTHYGRVCPIETPEGPNIGLINSLATYARTNKYGFLESPYRVVKDSLVTDEIVFLSAIEEADHVIAQASATLNEKGQLVDELVAVRHLNEFTVKAPEDVTLMDVSPKQVVSVAASLIPFLEHDDANRALMGSNMQRQAVPTLRADKPLVGTGMERNVARDSGVCVVARRGGVIDSVDASRVVVRVADDEVETGEAGVDIYNLTKYTRSNQNTCINQRPLVSKGDVVARGDILADGPSTDMGELALGQNMRVAFMPWNGFNFEDSICLSERVVQEDRFTTIHIQELTCVARDTKLGPEEITADIPNVGEAALNKLDEAGIVYVGAEVQAGDILVGKVTPKGETQLTPEEKLLRAIFGEKASDVKDTSLRVPTGTKGTVIDVQVFTRDGVERDSRALSIEKMQLDQIRKDLNEEFRIVEGATFERLRAALVGAKAEGGPALKKGTEITDDYLDGLERGQWFKLRMADDALNEQLEKAQAYISDRRQLLDDKFEDKKRKLQQGDDLAPGVLKIVKVYLAIKRRIQPGDKMAGRHGNKGVVSVIMPVEDMPHDANGTPVDIVLNPLGVPSRMNVGQILETHLGLAAKGLGEKINRMLEEQRKVAELRKFLHEIYNEIGGREENLDELGDNEILALAKNLRGGVPMATPVFDGAKEREIKAMLKLADLPESGQMRLFDGRTGNQFERPTTVGYMYMLKLNHLVDDKMHARSTGSYSLVTQQPLGGKAQFGGQRFGEMEVWALEAYGAAYTLQEMLTVKSDDVNGRTKMYKNIVDGDHRMEAGMPESFNVLIKEIRSLGIDIELETE</sequence>
<dbReference type="EC" id="2.7.7.6" evidence="1"/>
<dbReference type="EMBL" id="AE004091">
    <property type="protein sequence ID" value="AAG07658.1"/>
    <property type="molecule type" value="Genomic_DNA"/>
</dbReference>
<dbReference type="EMBL" id="M99386">
    <property type="protein sequence ID" value="AAA25985.1"/>
    <property type="molecule type" value="Genomic_DNA"/>
</dbReference>
<dbReference type="PIR" id="H83112">
    <property type="entry name" value="H83112"/>
</dbReference>
<dbReference type="RefSeq" id="NP_252960.1">
    <property type="nucleotide sequence ID" value="NC_002516.2"/>
</dbReference>
<dbReference type="RefSeq" id="WP_003114335.1">
    <property type="nucleotide sequence ID" value="NZ_QZGE01000028.1"/>
</dbReference>
<dbReference type="PDB" id="7F0R">
    <property type="method" value="EM"/>
    <property type="resolution" value="5.80 A"/>
    <property type="chains" value="C=1-1357"/>
</dbReference>
<dbReference type="PDB" id="7VF9">
    <property type="method" value="EM"/>
    <property type="resolution" value="4.04 A"/>
    <property type="chains" value="C=1-1357"/>
</dbReference>
<dbReference type="PDB" id="7XL3">
    <property type="method" value="EM"/>
    <property type="resolution" value="3.13 A"/>
    <property type="chains" value="C=1-1357"/>
</dbReference>
<dbReference type="PDB" id="7XL4">
    <property type="method" value="EM"/>
    <property type="resolution" value="3.86 A"/>
    <property type="chains" value="C=1-1357"/>
</dbReference>
<dbReference type="PDB" id="7XYA">
    <property type="method" value="EM"/>
    <property type="resolution" value="3.30 A"/>
    <property type="chains" value="C=1-1357"/>
</dbReference>
<dbReference type="PDB" id="7XYB">
    <property type="method" value="EM"/>
    <property type="resolution" value="3.70 A"/>
    <property type="chains" value="C=1-1357"/>
</dbReference>
<dbReference type="PDBsum" id="7F0R"/>
<dbReference type="PDBsum" id="7VF9"/>
<dbReference type="PDBsum" id="7XL3"/>
<dbReference type="PDBsum" id="7XL4"/>
<dbReference type="PDBsum" id="7XYA"/>
<dbReference type="PDBsum" id="7XYB"/>
<dbReference type="EMDB" id="EMD-31403"/>
<dbReference type="EMDB" id="EMD-31948"/>
<dbReference type="EMDB" id="EMD-33271"/>
<dbReference type="EMDB" id="EMD-33272"/>
<dbReference type="EMDB" id="EMD-33515"/>
<dbReference type="EMDB" id="EMD-33516"/>
<dbReference type="SMR" id="Q51561"/>
<dbReference type="FunCoup" id="Q51561">
    <property type="interactions" value="766"/>
</dbReference>
<dbReference type="STRING" id="208964.PA4270"/>
<dbReference type="PaxDb" id="208964-PA4270"/>
<dbReference type="GeneID" id="881699"/>
<dbReference type="KEGG" id="pae:PA4270"/>
<dbReference type="PATRIC" id="fig|208964.12.peg.4471"/>
<dbReference type="PseudoCAP" id="PA4270"/>
<dbReference type="HOGENOM" id="CLU_000524_4_0_6"/>
<dbReference type="InParanoid" id="Q51561"/>
<dbReference type="OrthoDB" id="9803954at2"/>
<dbReference type="PhylomeDB" id="Q51561"/>
<dbReference type="BioCyc" id="PAER208964:G1FZ6-4343-MONOMER"/>
<dbReference type="Proteomes" id="UP000002438">
    <property type="component" value="Chromosome"/>
</dbReference>
<dbReference type="GO" id="GO:0000428">
    <property type="term" value="C:DNA-directed RNA polymerase complex"/>
    <property type="evidence" value="ECO:0007669"/>
    <property type="project" value="UniProtKB-KW"/>
</dbReference>
<dbReference type="GO" id="GO:0003677">
    <property type="term" value="F:DNA binding"/>
    <property type="evidence" value="ECO:0007669"/>
    <property type="project" value="UniProtKB-UniRule"/>
</dbReference>
<dbReference type="GO" id="GO:0003899">
    <property type="term" value="F:DNA-directed RNA polymerase activity"/>
    <property type="evidence" value="ECO:0007669"/>
    <property type="project" value="UniProtKB-UniRule"/>
</dbReference>
<dbReference type="GO" id="GO:0032549">
    <property type="term" value="F:ribonucleoside binding"/>
    <property type="evidence" value="ECO:0007669"/>
    <property type="project" value="InterPro"/>
</dbReference>
<dbReference type="GO" id="GO:0006351">
    <property type="term" value="P:DNA-templated transcription"/>
    <property type="evidence" value="ECO:0007669"/>
    <property type="project" value="UniProtKB-UniRule"/>
</dbReference>
<dbReference type="CDD" id="cd00653">
    <property type="entry name" value="RNA_pol_B_RPB2"/>
    <property type="match status" value="1"/>
</dbReference>
<dbReference type="FunFam" id="2.40.50.100:FF:000006">
    <property type="entry name" value="DNA-directed RNA polymerase subunit beta"/>
    <property type="match status" value="1"/>
</dbReference>
<dbReference type="FunFam" id="2.40.50.150:FF:000001">
    <property type="entry name" value="DNA-directed RNA polymerase subunit beta"/>
    <property type="match status" value="1"/>
</dbReference>
<dbReference type="FunFam" id="3.90.1110.10:FF:000001">
    <property type="entry name" value="DNA-directed RNA polymerase subunit beta"/>
    <property type="match status" value="1"/>
</dbReference>
<dbReference type="FunFam" id="3.90.1110.10:FF:000004">
    <property type="entry name" value="DNA-directed RNA polymerase subunit beta"/>
    <property type="match status" value="1"/>
</dbReference>
<dbReference type="FunFam" id="3.90.1800.10:FF:000001">
    <property type="entry name" value="DNA-directed RNA polymerase subunit beta"/>
    <property type="match status" value="1"/>
</dbReference>
<dbReference type="Gene3D" id="2.40.50.100">
    <property type="match status" value="1"/>
</dbReference>
<dbReference type="Gene3D" id="2.40.50.150">
    <property type="match status" value="1"/>
</dbReference>
<dbReference type="Gene3D" id="3.90.1100.10">
    <property type="match status" value="2"/>
</dbReference>
<dbReference type="Gene3D" id="6.10.140.1670">
    <property type="match status" value="1"/>
</dbReference>
<dbReference type="Gene3D" id="2.30.150.10">
    <property type="entry name" value="DNA-directed RNA polymerase, beta subunit, external 1 domain"/>
    <property type="match status" value="1"/>
</dbReference>
<dbReference type="Gene3D" id="2.40.270.10">
    <property type="entry name" value="DNA-directed RNA polymerase, subunit 2, domain 6"/>
    <property type="match status" value="1"/>
</dbReference>
<dbReference type="Gene3D" id="3.90.1800.10">
    <property type="entry name" value="RNA polymerase alpha subunit dimerisation domain"/>
    <property type="match status" value="1"/>
</dbReference>
<dbReference type="Gene3D" id="3.90.1110.10">
    <property type="entry name" value="RNA polymerase Rpb2, domain 2"/>
    <property type="match status" value="1"/>
</dbReference>
<dbReference type="HAMAP" id="MF_01321">
    <property type="entry name" value="RNApol_bact_RpoB"/>
    <property type="match status" value="1"/>
</dbReference>
<dbReference type="InterPro" id="IPR042107">
    <property type="entry name" value="DNA-dir_RNA_pol_bsu_ext_1_sf"/>
</dbReference>
<dbReference type="InterPro" id="IPR019462">
    <property type="entry name" value="DNA-dir_RNA_pol_bsu_external_1"/>
</dbReference>
<dbReference type="InterPro" id="IPR015712">
    <property type="entry name" value="DNA-dir_RNA_pol_su2"/>
</dbReference>
<dbReference type="InterPro" id="IPR007120">
    <property type="entry name" value="DNA-dir_RNAP_su2_dom"/>
</dbReference>
<dbReference type="InterPro" id="IPR037033">
    <property type="entry name" value="DNA-dir_RNAP_su2_hyb_sf"/>
</dbReference>
<dbReference type="InterPro" id="IPR010243">
    <property type="entry name" value="RNA_pol_bsu_bac"/>
</dbReference>
<dbReference type="InterPro" id="IPR007121">
    <property type="entry name" value="RNA_pol_bsu_CS"/>
</dbReference>
<dbReference type="InterPro" id="IPR007644">
    <property type="entry name" value="RNA_pol_bsu_protrusion"/>
</dbReference>
<dbReference type="InterPro" id="IPR007642">
    <property type="entry name" value="RNA_pol_Rpb2_2"/>
</dbReference>
<dbReference type="InterPro" id="IPR037034">
    <property type="entry name" value="RNA_pol_Rpb2_2_sf"/>
</dbReference>
<dbReference type="InterPro" id="IPR007645">
    <property type="entry name" value="RNA_pol_Rpb2_3"/>
</dbReference>
<dbReference type="InterPro" id="IPR007641">
    <property type="entry name" value="RNA_pol_Rpb2_7"/>
</dbReference>
<dbReference type="InterPro" id="IPR014724">
    <property type="entry name" value="RNA_pol_RPB2_OB-fold"/>
</dbReference>
<dbReference type="NCBIfam" id="NF001616">
    <property type="entry name" value="PRK00405.1"/>
    <property type="match status" value="1"/>
</dbReference>
<dbReference type="NCBIfam" id="TIGR02013">
    <property type="entry name" value="rpoB"/>
    <property type="match status" value="1"/>
</dbReference>
<dbReference type="PANTHER" id="PTHR20856">
    <property type="entry name" value="DNA-DIRECTED RNA POLYMERASE I SUBUNIT 2"/>
    <property type="match status" value="1"/>
</dbReference>
<dbReference type="Pfam" id="PF04563">
    <property type="entry name" value="RNA_pol_Rpb2_1"/>
    <property type="match status" value="1"/>
</dbReference>
<dbReference type="Pfam" id="PF04561">
    <property type="entry name" value="RNA_pol_Rpb2_2"/>
    <property type="match status" value="2"/>
</dbReference>
<dbReference type="Pfam" id="PF04565">
    <property type="entry name" value="RNA_pol_Rpb2_3"/>
    <property type="match status" value="1"/>
</dbReference>
<dbReference type="Pfam" id="PF10385">
    <property type="entry name" value="RNA_pol_Rpb2_45"/>
    <property type="match status" value="1"/>
</dbReference>
<dbReference type="Pfam" id="PF00562">
    <property type="entry name" value="RNA_pol_Rpb2_6"/>
    <property type="match status" value="1"/>
</dbReference>
<dbReference type="Pfam" id="PF04560">
    <property type="entry name" value="RNA_pol_Rpb2_7"/>
    <property type="match status" value="1"/>
</dbReference>
<dbReference type="SUPFAM" id="SSF64484">
    <property type="entry name" value="beta and beta-prime subunits of DNA dependent RNA-polymerase"/>
    <property type="match status" value="1"/>
</dbReference>
<dbReference type="PROSITE" id="PS01166">
    <property type="entry name" value="RNA_POL_BETA"/>
    <property type="match status" value="1"/>
</dbReference>
<keyword id="KW-0002">3D-structure</keyword>
<keyword id="KW-0240">DNA-directed RNA polymerase</keyword>
<keyword id="KW-0548">Nucleotidyltransferase</keyword>
<keyword id="KW-1185">Reference proteome</keyword>
<keyword id="KW-0804">Transcription</keyword>
<keyword id="KW-0808">Transferase</keyword>
<organism>
    <name type="scientific">Pseudomonas aeruginosa (strain ATCC 15692 / DSM 22644 / CIP 104116 / JCM 14847 / LMG 12228 / 1C / PRS 101 / PAO1)</name>
    <dbReference type="NCBI Taxonomy" id="208964"/>
    <lineage>
        <taxon>Bacteria</taxon>
        <taxon>Pseudomonadati</taxon>
        <taxon>Pseudomonadota</taxon>
        <taxon>Gammaproteobacteria</taxon>
        <taxon>Pseudomonadales</taxon>
        <taxon>Pseudomonadaceae</taxon>
        <taxon>Pseudomonas</taxon>
    </lineage>
</organism>
<name>RPOB_PSEAE</name>
<comment type="function">
    <text evidence="1">DNA-dependent RNA polymerase catalyzes the transcription of DNA into RNA using the four ribonucleoside triphosphates as substrates.</text>
</comment>
<comment type="catalytic activity">
    <reaction evidence="1">
        <text>RNA(n) + a ribonucleoside 5'-triphosphate = RNA(n+1) + diphosphate</text>
        <dbReference type="Rhea" id="RHEA:21248"/>
        <dbReference type="Rhea" id="RHEA-COMP:14527"/>
        <dbReference type="Rhea" id="RHEA-COMP:17342"/>
        <dbReference type="ChEBI" id="CHEBI:33019"/>
        <dbReference type="ChEBI" id="CHEBI:61557"/>
        <dbReference type="ChEBI" id="CHEBI:140395"/>
        <dbReference type="EC" id="2.7.7.6"/>
    </reaction>
</comment>
<comment type="subunit">
    <text evidence="1">The RNAP catalytic core consists of 2 alpha, 1 beta, 1 beta' and 1 omega subunit. When a sigma factor is associated with the core the holoenzyme is formed, which can initiate transcription.</text>
</comment>
<comment type="similarity">
    <text evidence="1">Belongs to the RNA polymerase beta chain family.</text>
</comment>